<gene>
    <name evidence="1" type="primary">nusA</name>
    <name type="ordered locus">CBU_1433</name>
</gene>
<evidence type="ECO:0000255" key="1">
    <source>
        <dbReference type="HAMAP-Rule" id="MF_00945"/>
    </source>
</evidence>
<evidence type="ECO:0000269" key="2">
    <source>
    </source>
</evidence>
<dbReference type="EMBL" id="AE016828">
    <property type="protein sequence ID" value="AAO90930.1"/>
    <property type="molecule type" value="Genomic_DNA"/>
</dbReference>
<dbReference type="RefSeq" id="NP_820416.1">
    <property type="nucleotide sequence ID" value="NC_002971.4"/>
</dbReference>
<dbReference type="RefSeq" id="WP_010958224.1">
    <property type="nucleotide sequence ID" value="NC_002971.4"/>
</dbReference>
<dbReference type="SMR" id="Q83BS0"/>
<dbReference type="STRING" id="227377.CBU_1433"/>
<dbReference type="EnsemblBacteria" id="AAO90930">
    <property type="protein sequence ID" value="AAO90930"/>
    <property type="gene ID" value="CBU_1433"/>
</dbReference>
<dbReference type="GeneID" id="1209339"/>
<dbReference type="KEGG" id="cbu:CBU_1433"/>
<dbReference type="PATRIC" id="fig|227377.7.peg.1432"/>
<dbReference type="eggNOG" id="COG0195">
    <property type="taxonomic scope" value="Bacteria"/>
</dbReference>
<dbReference type="eggNOG" id="COG2251">
    <property type="taxonomic scope" value="Bacteria"/>
</dbReference>
<dbReference type="HOGENOM" id="CLU_029242_0_0_6"/>
<dbReference type="OrthoDB" id="9807233at2"/>
<dbReference type="Proteomes" id="UP000002671">
    <property type="component" value="Chromosome"/>
</dbReference>
<dbReference type="GO" id="GO:0005829">
    <property type="term" value="C:cytosol"/>
    <property type="evidence" value="ECO:0000318"/>
    <property type="project" value="GO_Central"/>
</dbReference>
<dbReference type="GO" id="GO:0003700">
    <property type="term" value="F:DNA-binding transcription factor activity"/>
    <property type="evidence" value="ECO:0007669"/>
    <property type="project" value="InterPro"/>
</dbReference>
<dbReference type="GO" id="GO:0000166">
    <property type="term" value="F:nucleotide binding"/>
    <property type="evidence" value="ECO:0007669"/>
    <property type="project" value="InterPro"/>
</dbReference>
<dbReference type="GO" id="GO:0003723">
    <property type="term" value="F:RNA binding"/>
    <property type="evidence" value="ECO:0007669"/>
    <property type="project" value="UniProtKB-UniRule"/>
</dbReference>
<dbReference type="GO" id="GO:0006353">
    <property type="term" value="P:DNA-templated transcription termination"/>
    <property type="evidence" value="ECO:0007669"/>
    <property type="project" value="UniProtKB-UniRule"/>
</dbReference>
<dbReference type="GO" id="GO:0031564">
    <property type="term" value="P:transcription antitermination"/>
    <property type="evidence" value="ECO:0000318"/>
    <property type="project" value="GO_Central"/>
</dbReference>
<dbReference type="CDD" id="cd02134">
    <property type="entry name" value="KH-II_NusA_rpt1"/>
    <property type="match status" value="1"/>
</dbReference>
<dbReference type="CDD" id="cd22529">
    <property type="entry name" value="KH-II_NusA_rpt2"/>
    <property type="match status" value="1"/>
</dbReference>
<dbReference type="CDD" id="cd04455">
    <property type="entry name" value="S1_NusA"/>
    <property type="match status" value="1"/>
</dbReference>
<dbReference type="FunFam" id="3.30.300.20:FF:000002">
    <property type="entry name" value="Transcription termination/antitermination protein NusA"/>
    <property type="match status" value="1"/>
</dbReference>
<dbReference type="FunFam" id="3.30.300.20:FF:000005">
    <property type="entry name" value="Transcription termination/antitermination protein NusA"/>
    <property type="match status" value="1"/>
</dbReference>
<dbReference type="Gene3D" id="3.30.300.20">
    <property type="match status" value="2"/>
</dbReference>
<dbReference type="Gene3D" id="1.10.150.20">
    <property type="entry name" value="5' to 3' exonuclease, C-terminal subdomain"/>
    <property type="match status" value="2"/>
</dbReference>
<dbReference type="Gene3D" id="2.40.50.140">
    <property type="entry name" value="Nucleic acid-binding proteins"/>
    <property type="match status" value="1"/>
</dbReference>
<dbReference type="Gene3D" id="3.30.1480.10">
    <property type="entry name" value="NusA, N-terminal domain"/>
    <property type="match status" value="1"/>
</dbReference>
<dbReference type="HAMAP" id="MF_00945_B">
    <property type="entry name" value="NusA_B"/>
    <property type="match status" value="1"/>
</dbReference>
<dbReference type="InterPro" id="IPR010995">
    <property type="entry name" value="DNA_repair_Rad51/TF_NusA_a-hlx"/>
</dbReference>
<dbReference type="InterPro" id="IPR004087">
    <property type="entry name" value="KH_dom"/>
</dbReference>
<dbReference type="InterPro" id="IPR015946">
    <property type="entry name" value="KH_dom-like_a/b"/>
</dbReference>
<dbReference type="InterPro" id="IPR025249">
    <property type="entry name" value="KH_dom_NusA-like"/>
</dbReference>
<dbReference type="InterPro" id="IPR009019">
    <property type="entry name" value="KH_sf_prok-type"/>
</dbReference>
<dbReference type="InterPro" id="IPR012340">
    <property type="entry name" value="NA-bd_OB-fold"/>
</dbReference>
<dbReference type="InterPro" id="IPR030842">
    <property type="entry name" value="NusA_bac"/>
</dbReference>
<dbReference type="InterPro" id="IPR036555">
    <property type="entry name" value="NusA_N_sf"/>
</dbReference>
<dbReference type="InterPro" id="IPR003029">
    <property type="entry name" value="S1_domain"/>
</dbReference>
<dbReference type="InterPro" id="IPR013735">
    <property type="entry name" value="TF_NusA_N"/>
</dbReference>
<dbReference type="InterPro" id="IPR010214">
    <property type="entry name" value="Tscrpt_termin_fac_NusA_C_rpt"/>
</dbReference>
<dbReference type="InterPro" id="IPR010213">
    <property type="entry name" value="Tscrpt_termination_fac_NusA"/>
</dbReference>
<dbReference type="NCBIfam" id="TIGR01953">
    <property type="entry name" value="NusA"/>
    <property type="match status" value="1"/>
</dbReference>
<dbReference type="NCBIfam" id="TIGR01954">
    <property type="entry name" value="nusA_Cterm_rpt"/>
    <property type="match status" value="1"/>
</dbReference>
<dbReference type="PANTHER" id="PTHR22648">
    <property type="entry name" value="TRANSCRIPTION TERMINATION FACTOR NUSA"/>
    <property type="match status" value="1"/>
</dbReference>
<dbReference type="PANTHER" id="PTHR22648:SF0">
    <property type="entry name" value="TRANSCRIPTION TERMINATION_ANTITERMINATION PROTEIN NUSA"/>
    <property type="match status" value="1"/>
</dbReference>
<dbReference type="Pfam" id="PF14520">
    <property type="entry name" value="HHH_5"/>
    <property type="match status" value="1"/>
</dbReference>
<dbReference type="Pfam" id="PF13184">
    <property type="entry name" value="KH_5"/>
    <property type="match status" value="1"/>
</dbReference>
<dbReference type="Pfam" id="PF08529">
    <property type="entry name" value="NusA_N"/>
    <property type="match status" value="1"/>
</dbReference>
<dbReference type="SMART" id="SM00322">
    <property type="entry name" value="KH"/>
    <property type="match status" value="2"/>
</dbReference>
<dbReference type="SMART" id="SM00316">
    <property type="entry name" value="S1"/>
    <property type="match status" value="1"/>
</dbReference>
<dbReference type="SUPFAM" id="SSF50249">
    <property type="entry name" value="Nucleic acid-binding proteins"/>
    <property type="match status" value="1"/>
</dbReference>
<dbReference type="SUPFAM" id="SSF54814">
    <property type="entry name" value="Prokaryotic type KH domain (KH-domain type II)"/>
    <property type="match status" value="2"/>
</dbReference>
<dbReference type="SUPFAM" id="SSF47794">
    <property type="entry name" value="Rad51 N-terminal domain-like"/>
    <property type="match status" value="2"/>
</dbReference>
<dbReference type="SUPFAM" id="SSF69705">
    <property type="entry name" value="Transcription factor NusA, N-terminal domain"/>
    <property type="match status" value="1"/>
</dbReference>
<dbReference type="PROSITE" id="PS50084">
    <property type="entry name" value="KH_TYPE_1"/>
    <property type="match status" value="1"/>
</dbReference>
<dbReference type="PROSITE" id="PS50126">
    <property type="entry name" value="S1"/>
    <property type="match status" value="1"/>
</dbReference>
<accession>Q83BS0</accession>
<name>NUSA_COXBU</name>
<reference key="1">
    <citation type="journal article" date="2003" name="Proc. Natl. Acad. Sci. U.S.A.">
        <title>Complete genome sequence of the Q-fever pathogen, Coxiella burnetii.</title>
        <authorList>
            <person name="Seshadri R."/>
            <person name="Paulsen I.T."/>
            <person name="Eisen J.A."/>
            <person name="Read T.D."/>
            <person name="Nelson K.E."/>
            <person name="Nelson W.C."/>
            <person name="Ward N.L."/>
            <person name="Tettelin H."/>
            <person name="Davidsen T.M."/>
            <person name="Beanan M.J."/>
            <person name="DeBoy R.T."/>
            <person name="Daugherty S.C."/>
            <person name="Brinkac L.M."/>
            <person name="Madupu R."/>
            <person name="Dodson R.J."/>
            <person name="Khouri H.M."/>
            <person name="Lee K.H."/>
            <person name="Carty H.A."/>
            <person name="Scanlan D."/>
            <person name="Heinzen R.A."/>
            <person name="Thompson H.A."/>
            <person name="Samuel J.E."/>
            <person name="Fraser C.M."/>
            <person name="Heidelberg J.F."/>
        </authorList>
    </citation>
    <scope>NUCLEOTIDE SEQUENCE [LARGE SCALE GENOMIC DNA]</scope>
    <source>
        <strain>RSA 493 / Nine Mile phase I</strain>
    </source>
</reference>
<reference key="2">
    <citation type="journal article" date="2007" name="Infect. Immun.">
        <title>Proteome and antigen profiling of Coxiella burnetii developmental forms.</title>
        <authorList>
            <person name="Coleman S.A."/>
            <person name="Fischer E.R."/>
            <person name="Cockrell D.C."/>
            <person name="Voth D.E."/>
            <person name="Howe D."/>
            <person name="Mead D.J."/>
            <person name="Samuel J.E."/>
            <person name="Heinzen R.A."/>
        </authorList>
    </citation>
    <scope>IDENTIFICATION BY MASS SPECTROMETRY</scope>
    <scope>DEVELOPMENTAL STAGE</scope>
    <source>
        <strain>Nine Mile Crazy / RSA 514</strain>
    </source>
</reference>
<feature type="chain" id="PRO_0000322127" description="Transcription termination/antitermination protein NusA">
    <location>
        <begin position="1"/>
        <end position="503"/>
    </location>
</feature>
<feature type="domain" description="S1 motif" evidence="1">
    <location>
        <begin position="140"/>
        <end position="206"/>
    </location>
</feature>
<feature type="domain" description="KH" evidence="1">
    <location>
        <begin position="308"/>
        <end position="374"/>
    </location>
</feature>
<proteinExistence type="evidence at protein level"/>
<protein>
    <recommendedName>
        <fullName evidence="1">Transcription termination/antitermination protein NusA</fullName>
    </recommendedName>
</protein>
<comment type="function">
    <text evidence="1">Participates in both transcription termination and antitermination.</text>
</comment>
<comment type="subunit">
    <text evidence="1">Monomer. Binds directly to the core enzyme of the DNA-dependent RNA polymerase and to nascent RNA.</text>
</comment>
<comment type="subcellular location">
    <subcellularLocation>
        <location evidence="1">Cytoplasm</location>
    </subcellularLocation>
</comment>
<comment type="developmental stage">
    <text evidence="2">More than twofold more abundant in the large cell variant (LCV) stage than in the small cell variant (SCV) stage (at protein level). LCVs are more metabolically active than SCVs.</text>
</comment>
<comment type="similarity">
    <text evidence="1">Belongs to the NusA family.</text>
</comment>
<organism>
    <name type="scientific">Coxiella burnetii (strain RSA 493 / Nine Mile phase I)</name>
    <dbReference type="NCBI Taxonomy" id="227377"/>
    <lineage>
        <taxon>Bacteria</taxon>
        <taxon>Pseudomonadati</taxon>
        <taxon>Pseudomonadota</taxon>
        <taxon>Gammaproteobacteria</taxon>
        <taxon>Legionellales</taxon>
        <taxon>Coxiellaceae</taxon>
        <taxon>Coxiella</taxon>
    </lineage>
</organism>
<sequence length="503" mass="56275">MNKDILLIVDSMSNERGVSKEVIFEAIEAALAAVTAKRYEEDDVKIRVAIDQKTGDYESFRCWTVVEDTNESLEFPNQEMTLKQAREIDSDLEVGDVIEEPVESVKFGRIAVQQAKQVIVQKVREAERAKIIRQYEKRVGELVIGVVKRVTRESIILDMGENAEALLLREEMIPREAFRINDRLRAYLYSVCQDKKRGPQLLVSRTRPEFLVELFKIEVPEIGEEVIEIKGAARDPGSRAKIAVKTNDGRIDPIGACVGMRGSRVQAVSNELGGERIDIVLWDDNPAQLVINAMAPAEVASIVVDEDSHTMDIAVNKDQLSQAIGRSGQNVRLASELTGWTLNVMSEAEMAQKHEKEAGKIKTAFMEKLDVDEEVADALVQAGFMNLEEVAYVPKEELQGVEGFDEDISAELQRRAGDVLLTQEIAKQELDEKKPAEDLLTLPGMTTELARQLVENEVLTRDDLAEKSVLDLKEIIEIDDEAAANLIMAARAHWFAEEESEKS</sequence>
<keyword id="KW-0963">Cytoplasm</keyword>
<keyword id="KW-1185">Reference proteome</keyword>
<keyword id="KW-0694">RNA-binding</keyword>
<keyword id="KW-0804">Transcription</keyword>
<keyword id="KW-0889">Transcription antitermination</keyword>
<keyword id="KW-0805">Transcription regulation</keyword>
<keyword id="KW-0806">Transcription termination</keyword>